<proteinExistence type="inferred from homology"/>
<evidence type="ECO:0000255" key="1">
    <source>
        <dbReference type="HAMAP-Rule" id="MF_01529"/>
    </source>
</evidence>
<keyword id="KW-0997">Cell inner membrane</keyword>
<keyword id="KW-1003">Cell membrane</keyword>
<keyword id="KW-0472">Membrane</keyword>
<keyword id="KW-1185">Reference proteome</keyword>
<keyword id="KW-0812">Transmembrane</keyword>
<keyword id="KW-1133">Transmembrane helix</keyword>
<keyword id="KW-0813">Transport</keyword>
<name>MDTH_BLOPB</name>
<comment type="subcellular location">
    <subcellularLocation>
        <location evidence="1">Cell inner membrane</location>
        <topology evidence="1">Multi-pass membrane protein</topology>
    </subcellularLocation>
</comment>
<comment type="similarity">
    <text evidence="1">Belongs to the major facilitator superfamily. DHA1 family. MdtH (TC 2.A.1.2.21) subfamily.</text>
</comment>
<accession>Q492K8</accession>
<gene>
    <name evidence="1" type="primary">mdtH</name>
    <name type="ordered locus">BPEN_470</name>
</gene>
<protein>
    <recommendedName>
        <fullName evidence="1">Multidrug resistance protein MdtH</fullName>
    </recommendedName>
</protein>
<organism>
    <name type="scientific">Blochmanniella pennsylvanica (strain BPEN)</name>
    <dbReference type="NCBI Taxonomy" id="291272"/>
    <lineage>
        <taxon>Bacteria</taxon>
        <taxon>Pseudomonadati</taxon>
        <taxon>Pseudomonadota</taxon>
        <taxon>Gammaproteobacteria</taxon>
        <taxon>Enterobacterales</taxon>
        <taxon>Enterobacteriaceae</taxon>
        <taxon>ant endosymbionts</taxon>
        <taxon>Candidatus Blochmanniella</taxon>
    </lineage>
</organism>
<sequence>MYTISKARRLGKCFLIIDNMFVVIGFYVVFPLISIYFVEQLGWGAFLVGFALGLRQFIQQGLGIFSGAFADKLGAKPMIVSGLFIRTLGFIIMSVANTPLLLCLSCMLSALGGTLFDPPRTALVIKLVRPWELGRFYSVLMLEDSMCAIIGIVLGTWLLQYNFKLVCFTGAILFFIAGVFNAWRLPAYKISSSHASLLEGIKKVLNNQRFVIYVFTLTGYYILSAQVMLMLPIRIHEVSGQLSYIKWMYIIEAILSLLLIMPITWWSEKYFKLETRLMVGLITMIISLFPIGLVKNLHTLLILISLFYIGSIIAEPARETLGALLTDYKARSSYIGFSKLSLALGGTVGYSGSGWLYDIGKEQNFTQLPWIILSIIGLITLLGLYCQFKYYSFQSLLNNSHNKKRKL</sequence>
<dbReference type="EMBL" id="CP000016">
    <property type="protein sequence ID" value="AAZ41089.1"/>
    <property type="molecule type" value="Genomic_DNA"/>
</dbReference>
<dbReference type="RefSeq" id="WP_011282999.1">
    <property type="nucleotide sequence ID" value="NC_007292.1"/>
</dbReference>
<dbReference type="SMR" id="Q492K8"/>
<dbReference type="STRING" id="291272.BPEN_470"/>
<dbReference type="KEGG" id="bpn:BPEN_470"/>
<dbReference type="eggNOG" id="COG2814">
    <property type="taxonomic scope" value="Bacteria"/>
</dbReference>
<dbReference type="HOGENOM" id="CLU_001265_60_2_6"/>
<dbReference type="OrthoDB" id="56516at2"/>
<dbReference type="Proteomes" id="UP000007794">
    <property type="component" value="Chromosome"/>
</dbReference>
<dbReference type="GO" id="GO:0005886">
    <property type="term" value="C:plasma membrane"/>
    <property type="evidence" value="ECO:0007669"/>
    <property type="project" value="UniProtKB-SubCell"/>
</dbReference>
<dbReference type="GO" id="GO:0022857">
    <property type="term" value="F:transmembrane transporter activity"/>
    <property type="evidence" value="ECO:0007669"/>
    <property type="project" value="UniProtKB-UniRule"/>
</dbReference>
<dbReference type="CDD" id="cd17329">
    <property type="entry name" value="MFS_MdtH_MDR_like"/>
    <property type="match status" value="1"/>
</dbReference>
<dbReference type="Gene3D" id="1.20.1250.20">
    <property type="entry name" value="MFS general substrate transporter like domains"/>
    <property type="match status" value="1"/>
</dbReference>
<dbReference type="HAMAP" id="MF_01529">
    <property type="entry name" value="MFS_MdtH"/>
    <property type="match status" value="1"/>
</dbReference>
<dbReference type="InterPro" id="IPR011701">
    <property type="entry name" value="MFS"/>
</dbReference>
<dbReference type="InterPro" id="IPR020846">
    <property type="entry name" value="MFS_dom"/>
</dbReference>
<dbReference type="InterPro" id="IPR036259">
    <property type="entry name" value="MFS_trans_sf"/>
</dbReference>
<dbReference type="InterPro" id="IPR050171">
    <property type="entry name" value="MFS_Transporters"/>
</dbReference>
<dbReference type="InterPro" id="IPR022855">
    <property type="entry name" value="Multidrug-R_MdtH"/>
</dbReference>
<dbReference type="NCBIfam" id="NF008650">
    <property type="entry name" value="PRK11646.1"/>
    <property type="match status" value="1"/>
</dbReference>
<dbReference type="PANTHER" id="PTHR23517:SF2">
    <property type="entry name" value="MULTIDRUG RESISTANCE PROTEIN MDTH"/>
    <property type="match status" value="1"/>
</dbReference>
<dbReference type="PANTHER" id="PTHR23517">
    <property type="entry name" value="RESISTANCE PROTEIN MDTM, PUTATIVE-RELATED-RELATED"/>
    <property type="match status" value="1"/>
</dbReference>
<dbReference type="Pfam" id="PF07690">
    <property type="entry name" value="MFS_1"/>
    <property type="match status" value="1"/>
</dbReference>
<dbReference type="SUPFAM" id="SSF103473">
    <property type="entry name" value="MFS general substrate transporter"/>
    <property type="match status" value="1"/>
</dbReference>
<dbReference type="PROSITE" id="PS50850">
    <property type="entry name" value="MFS"/>
    <property type="match status" value="1"/>
</dbReference>
<reference key="1">
    <citation type="journal article" date="2005" name="Genome Res.">
        <title>Genome sequence of Blochmannia pennsylvanicus indicates parallel evolutionary trends among bacterial mutualists of insects.</title>
        <authorList>
            <person name="Degnan P.H."/>
            <person name="Lazarus A.B."/>
            <person name="Wernegreen J.J."/>
        </authorList>
    </citation>
    <scope>NUCLEOTIDE SEQUENCE [LARGE SCALE GENOMIC DNA]</scope>
    <source>
        <strain>BPEN</strain>
    </source>
</reference>
<feature type="chain" id="PRO_0000280495" description="Multidrug resistance protein MdtH">
    <location>
        <begin position="1"/>
        <end position="407"/>
    </location>
</feature>
<feature type="transmembrane region" description="Helical" evidence="1">
    <location>
        <begin position="13"/>
        <end position="33"/>
    </location>
</feature>
<feature type="transmembrane region" description="Helical" evidence="1">
    <location>
        <begin position="88"/>
        <end position="108"/>
    </location>
</feature>
<feature type="transmembrane region" description="Helical" evidence="1">
    <location>
        <begin position="139"/>
        <end position="159"/>
    </location>
</feature>
<feature type="transmembrane region" description="Helical" evidence="1">
    <location>
        <begin position="163"/>
        <end position="183"/>
    </location>
</feature>
<feature type="transmembrane region" description="Helical" evidence="1">
    <location>
        <begin position="210"/>
        <end position="230"/>
    </location>
</feature>
<feature type="transmembrane region" description="Helical" evidence="1">
    <location>
        <begin position="247"/>
        <end position="267"/>
    </location>
</feature>
<feature type="transmembrane region" description="Helical" evidence="1">
    <location>
        <begin position="277"/>
        <end position="297"/>
    </location>
</feature>
<feature type="transmembrane region" description="Helical" evidence="1">
    <location>
        <begin position="298"/>
        <end position="318"/>
    </location>
</feature>
<feature type="transmembrane region" description="Helical" evidence="1">
    <location>
        <begin position="340"/>
        <end position="360"/>
    </location>
</feature>
<feature type="transmembrane region" description="Helical" evidence="1">
    <location>
        <begin position="368"/>
        <end position="388"/>
    </location>
</feature>